<organism>
    <name type="scientific">Arabidopsis thaliana</name>
    <name type="common">Mouse-ear cress</name>
    <dbReference type="NCBI Taxonomy" id="3702"/>
    <lineage>
        <taxon>Eukaryota</taxon>
        <taxon>Viridiplantae</taxon>
        <taxon>Streptophyta</taxon>
        <taxon>Embryophyta</taxon>
        <taxon>Tracheophyta</taxon>
        <taxon>Spermatophyta</taxon>
        <taxon>Magnoliopsida</taxon>
        <taxon>eudicotyledons</taxon>
        <taxon>Gunneridae</taxon>
        <taxon>Pentapetalae</taxon>
        <taxon>rosids</taxon>
        <taxon>malvids</taxon>
        <taxon>Brassicales</taxon>
        <taxon>Brassicaceae</taxon>
        <taxon>Camelineae</taxon>
        <taxon>Arabidopsis</taxon>
    </lineage>
</organism>
<name>SOP16_ARATH</name>
<proteinExistence type="inferred from homology"/>
<sequence>MATKISHLVSLLLSLLLLLLFISSQVGFTEAKRDERKKMSSPPIPSPLIPSPPIPPPPPRFYVPPSKSRRGKGP</sequence>
<reference key="1">
    <citation type="journal article" date="1998" name="DNA Res.">
        <title>Structural analysis of Arabidopsis thaliana chromosome 5. VIII. Sequence features of the regions of 1,081,958 bp covered by seventeen physically assigned P1 and TAC clones.</title>
        <authorList>
            <person name="Asamizu E."/>
            <person name="Sato S."/>
            <person name="Kaneko T."/>
            <person name="Nakamura Y."/>
            <person name="Kotani H."/>
            <person name="Miyajima N."/>
            <person name="Tabata S."/>
        </authorList>
    </citation>
    <scope>NUCLEOTIDE SEQUENCE [LARGE SCALE GENOMIC DNA]</scope>
    <source>
        <strain>cv. Columbia</strain>
    </source>
</reference>
<reference key="2">
    <citation type="journal article" date="2017" name="Plant J.">
        <title>Araport11: a complete reannotation of the Arabidopsis thaliana reference genome.</title>
        <authorList>
            <person name="Cheng C.Y."/>
            <person name="Krishnakumar V."/>
            <person name="Chan A.P."/>
            <person name="Thibaud-Nissen F."/>
            <person name="Schobel S."/>
            <person name="Town C.D."/>
        </authorList>
    </citation>
    <scope>GENOME REANNOTATION</scope>
    <source>
        <strain>cv. Columbia</strain>
    </source>
</reference>
<reference key="3">
    <citation type="journal article" date="2019" name="J. Exp. Bot.">
        <title>The SCOOP12 peptide regulates defense response and root elongation in Arabidopsis thaliana.</title>
        <authorList>
            <person name="Gully K."/>
            <person name="Pelletier S."/>
            <person name="Guillou M.-C."/>
            <person name="Ferrand M."/>
            <person name="Aligon S."/>
            <person name="Pokotylo I."/>
            <person name="Perrin A."/>
            <person name="Vergne E."/>
            <person name="Fagard M."/>
            <person name="Ruelland E."/>
            <person name="Grappin P."/>
            <person name="Bucher E."/>
            <person name="Renou J.-P."/>
            <person name="Aubourg S."/>
        </authorList>
    </citation>
    <scope>GENE FAMILY</scope>
    <source>
        <strain>cv. Columbia</strain>
        <strain>cv. Wassilewskija</strain>
    </source>
</reference>
<reference key="4">
    <citation type="journal article" date="2021" name="Nat. Commun.">
        <title>The Arabidopsis MIK2 receptor elicits immunity by sensing a conserved signature from phytocytokines and microbes.</title>
        <authorList>
            <person name="Hou S."/>
            <person name="Liu D."/>
            <person name="Huang S."/>
            <person name="Luo D."/>
            <person name="Liu Z."/>
            <person name="Xiang Q."/>
            <person name="Wang P."/>
            <person name="Mu R."/>
            <person name="Han Z."/>
            <person name="Chen S."/>
            <person name="Chai J."/>
            <person name="Shan L."/>
            <person name="He P."/>
        </authorList>
    </citation>
    <scope>GENE FAMILY</scope>
    <scope>NOMENCLATURE</scope>
    <source>
        <strain>cv. Columbia</strain>
    </source>
</reference>
<keyword id="KW-0052">Apoplast</keyword>
<keyword id="KW-1003">Cell membrane</keyword>
<keyword id="KW-0165">Cleavage on pair of basic residues</keyword>
<keyword id="KW-0472">Membrane</keyword>
<keyword id="KW-1185">Reference proteome</keyword>
<keyword id="KW-0964">Secreted</keyword>
<keyword id="KW-0732">Signal</keyword>
<protein>
    <recommendedName>
        <fullName evidence="4">Serine rich endogenous peptide 16</fullName>
        <shortName evidence="4">AtSCOOP16</shortName>
    </recommendedName>
    <alternativeName>
        <fullName evidence="4">Phytocytokine SCOOP16</fullName>
    </alternativeName>
    <alternativeName>
        <fullName evidence="4">Precursor of serine rich endogenous peptide phytocytokine 16</fullName>
    </alternativeName>
</protein>
<accession>A0A178U9T0</accession>
<accession>A0A1P8BAI7</accession>
<dbReference type="EMBL" id="AB016877">
    <property type="status" value="NOT_ANNOTATED_CDS"/>
    <property type="molecule type" value="Genomic_DNA"/>
</dbReference>
<dbReference type="EMBL" id="CP002688">
    <property type="protein sequence ID" value="ANM68605.1"/>
    <property type="molecule type" value="Genomic_DNA"/>
</dbReference>
<dbReference type="RefSeq" id="NP_001330341.1">
    <property type="nucleotide sequence ID" value="NM_001344158.1"/>
</dbReference>
<dbReference type="SMR" id="A0A178U9T0"/>
<dbReference type="EnsemblPlants" id="AT5G36907.1">
    <property type="protein sequence ID" value="AT5G36907.1"/>
    <property type="gene ID" value="AT5G36907"/>
</dbReference>
<dbReference type="GeneID" id="28721220"/>
<dbReference type="Gramene" id="AT5G36907.1">
    <property type="protein sequence ID" value="AT5G36907.1"/>
    <property type="gene ID" value="AT5G36907"/>
</dbReference>
<dbReference type="KEGG" id="ath:AT5G36907"/>
<dbReference type="Araport" id="AT5G36907"/>
<dbReference type="TAIR" id="AT5G36907"/>
<dbReference type="InParanoid" id="A0A178U9T0"/>
<dbReference type="PRO" id="PR:A0A178U9T0"/>
<dbReference type="Proteomes" id="UP000006548">
    <property type="component" value="Chromosome 5"/>
</dbReference>
<dbReference type="ExpressionAtlas" id="A0A178U9T0">
    <property type="expression patterns" value="baseline and differential"/>
</dbReference>
<dbReference type="GO" id="GO:0048046">
    <property type="term" value="C:apoplast"/>
    <property type="evidence" value="ECO:0000250"/>
    <property type="project" value="UniProtKB"/>
</dbReference>
<dbReference type="GO" id="GO:0005886">
    <property type="term" value="C:plasma membrane"/>
    <property type="evidence" value="ECO:0007669"/>
    <property type="project" value="UniProtKB-SubCell"/>
</dbReference>
<dbReference type="GO" id="GO:0030275">
    <property type="term" value="F:LRR domain binding"/>
    <property type="evidence" value="ECO:0000250"/>
    <property type="project" value="UniProtKB"/>
</dbReference>
<dbReference type="GO" id="GO:0033612">
    <property type="term" value="F:receptor serine/threonine kinase binding"/>
    <property type="evidence" value="ECO:0000250"/>
    <property type="project" value="UniProtKB"/>
</dbReference>
<comment type="function">
    <text evidence="1">Brassicaceae-specific phytocytokine (plant endogenous peptide released into the apoplast) perceived by MIK2 in a BAK1/SERK3 and SERK4 coreceptors-dependent manner, that modulates various physiological and antimicrobial processes including growth prevention and reactive oxygen species (ROS) response regulation.</text>
</comment>
<comment type="subunit">
    <text evidence="1">Interacts with MIK2 (via extracellular leucine-rich repeat domain); this interaction triggers the formation of complex between MIK2 and the BAK1/SERK3 and SERK4 coreceptors, and subsequent BAK1 activation by phosphorylation.</text>
</comment>
<comment type="subcellular location">
    <subcellularLocation>
        <location evidence="1">Cell membrane</location>
    </subcellularLocation>
    <subcellularLocation>
        <location evidence="1">Secreted</location>
        <location evidence="1">Extracellular space</location>
        <location evidence="1">Apoplast</location>
    </subcellularLocation>
    <text evidence="1">The precursor of SCOOP16, PROSCOOP16, accumulates at the plasma membrane and is proteolytically cleaved to release the SCOOP16 in the apoplasm.</text>
</comment>
<comment type="similarity">
    <text evidence="5">Belongs to the serine rich endogenous peptide (SCOOP) phytocytokine family.</text>
</comment>
<feature type="signal peptide" evidence="2">
    <location>
        <begin position="1"/>
        <end position="31"/>
    </location>
</feature>
<feature type="propeptide" id="PRO_0000457244" description="Removed in mature form" evidence="1">
    <location>
        <begin position="32"/>
        <end status="unknown"/>
    </location>
</feature>
<feature type="peptide" id="PRO_0000457245" description="Serine rich endogenous peptide 16" evidence="1">
    <location>
        <begin status="unknown"/>
        <end position="74"/>
    </location>
</feature>
<feature type="region of interest" description="Disordered" evidence="3">
    <location>
        <begin position="29"/>
        <end position="74"/>
    </location>
</feature>
<feature type="short sequence motif" description="SCOOP motif" evidence="6">
    <location>
        <begin position="60"/>
        <end position="74"/>
    </location>
</feature>
<feature type="short sequence motif" description="SxS motif essential for MIK2 binding" evidence="1">
    <location>
        <begin position="66"/>
        <end position="68"/>
    </location>
</feature>
<feature type="compositionally biased region" description="Pro residues" evidence="3">
    <location>
        <begin position="42"/>
        <end position="62"/>
    </location>
</feature>
<gene>
    <name evidence="4" type="primary">PROSCOOP16</name>
    <name evidence="4" type="synonym">SCOOP16</name>
    <name evidence="7" type="ordered locus">At5g36907</name>
    <name evidence="8" type="ORF">MLF18</name>
</gene>
<evidence type="ECO:0000250" key="1">
    <source>
        <dbReference type="UniProtKB" id="B3H7I1"/>
    </source>
</evidence>
<evidence type="ECO:0000255" key="2"/>
<evidence type="ECO:0000256" key="3">
    <source>
        <dbReference type="SAM" id="MobiDB-lite"/>
    </source>
</evidence>
<evidence type="ECO:0000303" key="4">
    <source>
    </source>
</evidence>
<evidence type="ECO:0000305" key="5"/>
<evidence type="ECO:0000305" key="6">
    <source>
    </source>
</evidence>
<evidence type="ECO:0000312" key="7">
    <source>
        <dbReference type="Araport" id="AT5G36907"/>
    </source>
</evidence>
<evidence type="ECO:0000312" key="8">
    <source>
        <dbReference type="EMBL" id="AB016877"/>
    </source>
</evidence>